<proteinExistence type="evidence at transcript level"/>
<sequence>MLRAKLVDDPQIKYASLHNPLPTQLHAYVWPFLIIWPAFFAVYLSPERYDTYIQGQEWTFVWSGSIITAQSLLWLMTKWNINIQTLFTATKARSLDSAQLIKVIPVANAGSAEICPLHCDTMGGKKTFSFLFQKRRFLYYPERQCFAPLSYVLDAEPKPPVKVFQQAQGLTSKEEIDRIQHHYGDNTFDIPVPTFMELFKEHAVAPFFVFQVFCVGLWMLDEYWYYSLFTLFMLVVFESTVVWQRQRTLNEFRGMNIKPYDVWVYRQKKWQELTSDKLLPGDLMSVNRTKEDSGVACDILLIEGSAIVNEAMLSGESTPLLKESIQLRPGDDLIDPDGLDKNAFVHGGTKVLQITHHNSNGEDGSEKARKLSSGVPLPPDNGAVGVVVKTGFETSQGSLVRTMIYSTERVSANNVEALLFILFLLIFAIAAAWYVWQEGVAKDRKRSKLLLDCVLIVTSVVPPELPMELSLAVNTSLAALSKFAIFCTEPFRIPFAGRVDVACFDKTGTLTGEDLVVDGIAGLTLGHEGADVGKDGAHTELAKSANVPLDTTLVLASAHALVKLDEGEVVGDPMEKATLQWLGWTLGRNDTLMSKAAALAGPRTVESVQIKRRFQFSSALKRQSTIATVVTADRKTSKKTKATFVGVKGAPETIRTMLVNTPPHYEETFKYFTRNGARVLALAYKYLSEESELSQGRINGYIREEIEADLIFAGFLVLQCPLKEDAIKAVRMLNESSHRVVMITGDNPLTAVHVARKVEIVDRDVLILDAPEDDMSGTRLVWRSIDDKFNRDVDPTQDLDPEIIETKDICITGYALAKFKGQKAFSTLLRHTWVYARVSPKQKEDILVGLKDAGYTTLMCGDGTNDVGALKQAHVGVALLNGSPEDLAKIAEHYRTTKMKEIYEKQVSMMQRFNQPPPPVPVQIAHLYPPGPRNPHYQKAMEREAQRKGAATLATAGNQTEHIPTITSPGAQALQQSNANLTPQQQRQQQASIAAAGFADKLTSSMLEQELDDSEPPTIKLGDASVAAPFTSKLANVIAIPNILRQGRCTLVATIQMYKILALNCLISAYSLSVIYLDGIKFGDGQVTISGMLMSVCFLSISRAKSVEGLSKERPQPNIFNVYIIGSVLGQFAIHIATLIYLSNYVYSIEPRKSDIDLEGEFEPSLLNSAIYLLQLIQQISTFSINYQGRPFRESIRENKAMYWGLVAASGVAFSCATEFIPELNEKMRLVPFSTEFKVTLTVLMIIDYAGCWIIENVLKNLFSDFRPKDIAVRRPDQLQREMERKKQEELETQAEKERQRKV</sequence>
<reference key="1">
    <citation type="journal article" date="2005" name="Nature">
        <title>Genomic sequence of the pathogenic and allergenic filamentous fungus Aspergillus fumigatus.</title>
        <authorList>
            <person name="Nierman W.C."/>
            <person name="Pain A."/>
            <person name="Anderson M.J."/>
            <person name="Wortman J.R."/>
            <person name="Kim H.S."/>
            <person name="Arroyo J."/>
            <person name="Berriman M."/>
            <person name="Abe K."/>
            <person name="Archer D.B."/>
            <person name="Bermejo C."/>
            <person name="Bennett J.W."/>
            <person name="Bowyer P."/>
            <person name="Chen D."/>
            <person name="Collins M."/>
            <person name="Coulsen R."/>
            <person name="Davies R."/>
            <person name="Dyer P.S."/>
            <person name="Farman M.L."/>
            <person name="Fedorova N."/>
            <person name="Fedorova N.D."/>
            <person name="Feldblyum T.V."/>
            <person name="Fischer R."/>
            <person name="Fosker N."/>
            <person name="Fraser A."/>
            <person name="Garcia J.L."/>
            <person name="Garcia M.J."/>
            <person name="Goble A."/>
            <person name="Goldman G.H."/>
            <person name="Gomi K."/>
            <person name="Griffith-Jones S."/>
            <person name="Gwilliam R."/>
            <person name="Haas B.J."/>
            <person name="Haas H."/>
            <person name="Harris D.E."/>
            <person name="Horiuchi H."/>
            <person name="Huang J."/>
            <person name="Humphray S."/>
            <person name="Jimenez J."/>
            <person name="Keller N."/>
            <person name="Khouri H."/>
            <person name="Kitamoto K."/>
            <person name="Kobayashi T."/>
            <person name="Konzack S."/>
            <person name="Kulkarni R."/>
            <person name="Kumagai T."/>
            <person name="Lafton A."/>
            <person name="Latge J.-P."/>
            <person name="Li W."/>
            <person name="Lord A."/>
            <person name="Lu C."/>
            <person name="Majoros W.H."/>
            <person name="May G.S."/>
            <person name="Miller B.L."/>
            <person name="Mohamoud Y."/>
            <person name="Molina M."/>
            <person name="Monod M."/>
            <person name="Mouyna I."/>
            <person name="Mulligan S."/>
            <person name="Murphy L.D."/>
            <person name="O'Neil S."/>
            <person name="Paulsen I."/>
            <person name="Penalva M.A."/>
            <person name="Pertea M."/>
            <person name="Price C."/>
            <person name="Pritchard B.L."/>
            <person name="Quail M.A."/>
            <person name="Rabbinowitsch E."/>
            <person name="Rawlins N."/>
            <person name="Rajandream M.A."/>
            <person name="Reichard U."/>
            <person name="Renauld H."/>
            <person name="Robson G.D."/>
            <person name="Rodriguez de Cordoba S."/>
            <person name="Rodriguez-Pena J.M."/>
            <person name="Ronning C.M."/>
            <person name="Rutter S."/>
            <person name="Salzberg S.L."/>
            <person name="Sanchez M."/>
            <person name="Sanchez-Ferrero J.C."/>
            <person name="Saunders D."/>
            <person name="Seeger K."/>
            <person name="Squares R."/>
            <person name="Squares S."/>
            <person name="Takeuchi M."/>
            <person name="Tekaia F."/>
            <person name="Turner G."/>
            <person name="Vazquez de Aldana C.R."/>
            <person name="Weidman J."/>
            <person name="White O."/>
            <person name="Woodward J.R."/>
            <person name="Yu J.-H."/>
            <person name="Fraser C.M."/>
            <person name="Galagan J.E."/>
            <person name="Asai K."/>
            <person name="Machida M."/>
            <person name="Hall N."/>
            <person name="Barrell B.G."/>
            <person name="Denning D.W."/>
        </authorList>
    </citation>
    <scope>NUCLEOTIDE SEQUENCE [LARGE SCALE GENOMIC DNA]</scope>
    <source>
        <strain>ATCC MYA-4609 / CBS 101355 / FGSC A1100 / Af293</strain>
    </source>
</reference>
<reference key="2">
    <citation type="journal article" date="2021" name="MBio">
        <title>Pleiotropic effects of the P5-type ATPase SpfA on stress response networks contribute to virulence in the pathogenic mold Aspergillus fumigatus.</title>
        <authorList>
            <person name="Guirao-Abad J.P."/>
            <person name="Weichert M."/>
            <person name="Luengo-Gil G."/>
            <person name="Sze Wah Wong S."/>
            <person name="Aimanianda V."/>
            <person name="Grisham C."/>
            <person name="Malev N."/>
            <person name="Reddy S."/>
            <person name="Woollett L."/>
            <person name="Askew D.S."/>
        </authorList>
    </citation>
    <scope>FUNCTION</scope>
    <scope>INDUCTION</scope>
    <scope>SUBCELLULAR LOCATION</scope>
    <scope>DISRUPTION PHENOTYPE</scope>
</reference>
<dbReference type="EC" id="7.4.2.-" evidence="1"/>
<dbReference type="EMBL" id="AAHF01000002">
    <property type="protein sequence ID" value="EAL92207.1"/>
    <property type="molecule type" value="Genomic_DNA"/>
</dbReference>
<dbReference type="RefSeq" id="XP_754245.1">
    <property type="nucleotide sequence ID" value="XM_749152.1"/>
</dbReference>
<dbReference type="SMR" id="Q4WYP6"/>
<dbReference type="FunCoup" id="Q4WYP6">
    <property type="interactions" value="1134"/>
</dbReference>
<dbReference type="STRING" id="330879.Q4WYP6"/>
<dbReference type="EnsemblFungi" id="EAL92207">
    <property type="protein sequence ID" value="EAL92207"/>
    <property type="gene ID" value="AFUA_3G13790"/>
</dbReference>
<dbReference type="GeneID" id="3512412"/>
<dbReference type="KEGG" id="afm:AFUA_3G13790"/>
<dbReference type="VEuPathDB" id="FungiDB:Afu3g13790"/>
<dbReference type="eggNOG" id="KOG0209">
    <property type="taxonomic scope" value="Eukaryota"/>
</dbReference>
<dbReference type="HOGENOM" id="CLU_001828_4_1_1"/>
<dbReference type="InParanoid" id="Q4WYP6"/>
<dbReference type="OMA" id="QKTKYVW"/>
<dbReference type="OrthoDB" id="48943at2759"/>
<dbReference type="PHI-base" id="PHI:11765"/>
<dbReference type="Proteomes" id="UP000002530">
    <property type="component" value="Chromosome 3"/>
</dbReference>
<dbReference type="GO" id="GO:0005801">
    <property type="term" value="C:cis-Golgi network"/>
    <property type="evidence" value="ECO:0007669"/>
    <property type="project" value="EnsemblFungi"/>
</dbReference>
<dbReference type="GO" id="GO:0005789">
    <property type="term" value="C:endoplasmic reticulum membrane"/>
    <property type="evidence" value="ECO:0000318"/>
    <property type="project" value="GO_Central"/>
</dbReference>
<dbReference type="GO" id="GO:0005524">
    <property type="term" value="F:ATP binding"/>
    <property type="evidence" value="ECO:0007669"/>
    <property type="project" value="UniProtKB-KW"/>
</dbReference>
<dbReference type="GO" id="GO:0016887">
    <property type="term" value="F:ATP hydrolysis activity"/>
    <property type="evidence" value="ECO:0007669"/>
    <property type="project" value="EnsemblFungi"/>
</dbReference>
<dbReference type="GO" id="GO:0019829">
    <property type="term" value="F:ATPase-coupled monoatomic cation transmembrane transporter activity"/>
    <property type="evidence" value="ECO:0000318"/>
    <property type="project" value="GO_Central"/>
</dbReference>
<dbReference type="GO" id="GO:0140567">
    <property type="term" value="F:membrane protein dislocase activity"/>
    <property type="evidence" value="ECO:0007669"/>
    <property type="project" value="EnsemblFungi"/>
</dbReference>
<dbReference type="GO" id="GO:0046872">
    <property type="term" value="F:metal ion binding"/>
    <property type="evidence" value="ECO:0007669"/>
    <property type="project" value="UniProtKB-KW"/>
</dbReference>
<dbReference type="GO" id="GO:0015662">
    <property type="term" value="F:P-type ion transporter activity"/>
    <property type="evidence" value="ECO:0000318"/>
    <property type="project" value="GO_Central"/>
</dbReference>
<dbReference type="GO" id="GO:0070273">
    <property type="term" value="F:phosphatidylinositol-4-phosphate binding"/>
    <property type="evidence" value="ECO:0007669"/>
    <property type="project" value="EnsemblFungi"/>
</dbReference>
<dbReference type="GO" id="GO:0140569">
    <property type="term" value="P:extraction of mislocalized protein from ER membrane"/>
    <property type="evidence" value="ECO:0007669"/>
    <property type="project" value="EnsemblFungi"/>
</dbReference>
<dbReference type="GO" id="GO:0006874">
    <property type="term" value="P:intracellular calcium ion homeostasis"/>
    <property type="evidence" value="ECO:0000318"/>
    <property type="project" value="GO_Central"/>
</dbReference>
<dbReference type="GO" id="GO:0030026">
    <property type="term" value="P:intracellular manganese ion homeostasis"/>
    <property type="evidence" value="ECO:0007669"/>
    <property type="project" value="EnsemblFungi"/>
</dbReference>
<dbReference type="GO" id="GO:0034214">
    <property type="term" value="P:protein hexamerization"/>
    <property type="evidence" value="ECO:0007669"/>
    <property type="project" value="EnsemblFungi"/>
</dbReference>
<dbReference type="GO" id="GO:0043335">
    <property type="term" value="P:protein unfolding"/>
    <property type="evidence" value="ECO:0007669"/>
    <property type="project" value="EnsemblFungi"/>
</dbReference>
<dbReference type="GO" id="GO:0006986">
    <property type="term" value="P:response to unfolded protein"/>
    <property type="evidence" value="ECO:0007669"/>
    <property type="project" value="UniProtKB-KW"/>
</dbReference>
<dbReference type="GO" id="GO:0055092">
    <property type="term" value="P:sterol homeostasis"/>
    <property type="evidence" value="ECO:0007669"/>
    <property type="project" value="EnsemblFungi"/>
</dbReference>
<dbReference type="GO" id="GO:0055085">
    <property type="term" value="P:transmembrane transport"/>
    <property type="evidence" value="ECO:0000318"/>
    <property type="project" value="GO_Central"/>
</dbReference>
<dbReference type="CDD" id="cd07543">
    <property type="entry name" value="P-type_ATPase_cation"/>
    <property type="match status" value="1"/>
</dbReference>
<dbReference type="FunFam" id="2.70.150.10:FF:000049">
    <property type="entry name" value="Cation-transporting ATPase"/>
    <property type="match status" value="1"/>
</dbReference>
<dbReference type="FunFam" id="3.40.1110.10:FF:000054">
    <property type="entry name" value="Cation-transporting ATPase"/>
    <property type="match status" value="1"/>
</dbReference>
<dbReference type="FunFam" id="3.40.50.1000:FF:000071">
    <property type="entry name" value="Cation-transporting ATPase"/>
    <property type="match status" value="1"/>
</dbReference>
<dbReference type="Gene3D" id="3.40.1110.10">
    <property type="entry name" value="Calcium-transporting ATPase, cytoplasmic domain N"/>
    <property type="match status" value="1"/>
</dbReference>
<dbReference type="Gene3D" id="2.70.150.10">
    <property type="entry name" value="Calcium-transporting ATPase, cytoplasmic transduction domain A"/>
    <property type="match status" value="1"/>
</dbReference>
<dbReference type="Gene3D" id="3.40.50.1000">
    <property type="entry name" value="HAD superfamily/HAD-like"/>
    <property type="match status" value="1"/>
</dbReference>
<dbReference type="InterPro" id="IPR057255">
    <property type="entry name" value="2TM_P5A-ATPase"/>
</dbReference>
<dbReference type="InterPro" id="IPR023299">
    <property type="entry name" value="ATPase_P-typ_cyto_dom_N"/>
</dbReference>
<dbReference type="InterPro" id="IPR018303">
    <property type="entry name" value="ATPase_P-typ_P_site"/>
</dbReference>
<dbReference type="InterPro" id="IPR023298">
    <property type="entry name" value="ATPase_P-typ_TM_dom_sf"/>
</dbReference>
<dbReference type="InterPro" id="IPR008250">
    <property type="entry name" value="ATPase_P-typ_transduc_dom_A_sf"/>
</dbReference>
<dbReference type="InterPro" id="IPR036412">
    <property type="entry name" value="HAD-like_sf"/>
</dbReference>
<dbReference type="InterPro" id="IPR023214">
    <property type="entry name" value="HAD_sf"/>
</dbReference>
<dbReference type="InterPro" id="IPR006544">
    <property type="entry name" value="P-type_TPase_V"/>
</dbReference>
<dbReference type="InterPro" id="IPR047820">
    <property type="entry name" value="P5A-type_ATPase"/>
</dbReference>
<dbReference type="InterPro" id="IPR001757">
    <property type="entry name" value="P_typ_ATPase"/>
</dbReference>
<dbReference type="InterPro" id="IPR044492">
    <property type="entry name" value="P_typ_ATPase_HD_dom"/>
</dbReference>
<dbReference type="NCBIfam" id="TIGR01494">
    <property type="entry name" value="ATPase_P-type"/>
    <property type="match status" value="1"/>
</dbReference>
<dbReference type="NCBIfam" id="TIGR01657">
    <property type="entry name" value="P-ATPase-V"/>
    <property type="match status" value="1"/>
</dbReference>
<dbReference type="PANTHER" id="PTHR45630">
    <property type="entry name" value="CATION-TRANSPORTING ATPASE-RELATED"/>
    <property type="match status" value="1"/>
</dbReference>
<dbReference type="PANTHER" id="PTHR45630:SF7">
    <property type="entry name" value="ENDOPLASMIC RETICULUM TRANSMEMBRANE HELIX TRANSLOCASE"/>
    <property type="match status" value="1"/>
</dbReference>
<dbReference type="Pfam" id="PF23143">
    <property type="entry name" value="2TM_P5A-ATPase"/>
    <property type="match status" value="1"/>
</dbReference>
<dbReference type="Pfam" id="PF00122">
    <property type="entry name" value="E1-E2_ATPase"/>
    <property type="match status" value="1"/>
</dbReference>
<dbReference type="PRINTS" id="PR00119">
    <property type="entry name" value="CATATPASE"/>
</dbReference>
<dbReference type="SFLD" id="SFLDG00002">
    <property type="entry name" value="C1.7:_P-type_atpase_like"/>
    <property type="match status" value="1"/>
</dbReference>
<dbReference type="SFLD" id="SFLDF00027">
    <property type="entry name" value="p-type_atpase"/>
    <property type="match status" value="1"/>
</dbReference>
<dbReference type="SUPFAM" id="SSF81653">
    <property type="entry name" value="Calcium ATPase, transduction domain A"/>
    <property type="match status" value="1"/>
</dbReference>
<dbReference type="SUPFAM" id="SSF81665">
    <property type="entry name" value="Calcium ATPase, transmembrane domain M"/>
    <property type="match status" value="1"/>
</dbReference>
<dbReference type="SUPFAM" id="SSF56784">
    <property type="entry name" value="HAD-like"/>
    <property type="match status" value="1"/>
</dbReference>
<dbReference type="SUPFAM" id="SSF81660">
    <property type="entry name" value="Metal cation-transporting ATPase, ATP-binding domain N"/>
    <property type="match status" value="1"/>
</dbReference>
<dbReference type="PROSITE" id="PS00154">
    <property type="entry name" value="ATPASE_E1_E2"/>
    <property type="match status" value="1"/>
</dbReference>
<dbReference type="PROSITE" id="PS01229">
    <property type="entry name" value="COF_2"/>
    <property type="match status" value="1"/>
</dbReference>
<name>SPFA_ASPFU</name>
<gene>
    <name evidence="7" type="primary">spfA</name>
    <name type="ORF">AFUA_3G13790</name>
</gene>
<protein>
    <recommendedName>
        <fullName evidence="7">Endoplasmic reticulum transmembrane helix translocase spfA</fullName>
        <ecNumber evidence="1">7.4.2.-</ecNumber>
    </recommendedName>
</protein>
<keyword id="KW-0067">ATP-binding</keyword>
<keyword id="KW-0256">Endoplasmic reticulum</keyword>
<keyword id="KW-0325">Glycoprotein</keyword>
<keyword id="KW-0378">Hydrolase</keyword>
<keyword id="KW-0460">Magnesium</keyword>
<keyword id="KW-0472">Membrane</keyword>
<keyword id="KW-0479">Metal-binding</keyword>
<keyword id="KW-0547">Nucleotide-binding</keyword>
<keyword id="KW-1185">Reference proteome</keyword>
<keyword id="KW-1278">Translocase</keyword>
<keyword id="KW-0812">Transmembrane</keyword>
<keyword id="KW-1133">Transmembrane helix</keyword>
<keyword id="KW-0834">Unfolded protein response</keyword>
<keyword id="KW-0843">Virulence</keyword>
<accession>Q4WYP6</accession>
<organism>
    <name type="scientific">Aspergillus fumigatus (strain ATCC MYA-4609 / CBS 101355 / FGSC A1100 / Af293)</name>
    <name type="common">Neosartorya fumigata</name>
    <dbReference type="NCBI Taxonomy" id="330879"/>
    <lineage>
        <taxon>Eukaryota</taxon>
        <taxon>Fungi</taxon>
        <taxon>Dikarya</taxon>
        <taxon>Ascomycota</taxon>
        <taxon>Pezizomycotina</taxon>
        <taxon>Eurotiomycetes</taxon>
        <taxon>Eurotiomycetidae</taxon>
        <taxon>Eurotiales</taxon>
        <taxon>Aspergillaceae</taxon>
        <taxon>Aspergillus</taxon>
        <taxon>Aspergillus subgen. Fumigati</taxon>
    </lineage>
</organism>
<evidence type="ECO:0000250" key="1">
    <source>
        <dbReference type="UniProtKB" id="P39986"/>
    </source>
</evidence>
<evidence type="ECO:0000250" key="2">
    <source>
        <dbReference type="UniProtKB" id="Q9Y2Q0"/>
    </source>
</evidence>
<evidence type="ECO:0000255" key="3"/>
<evidence type="ECO:0000255" key="4">
    <source>
        <dbReference type="PROSITE-ProRule" id="PRU00498"/>
    </source>
</evidence>
<evidence type="ECO:0000256" key="5">
    <source>
        <dbReference type="SAM" id="MobiDB-lite"/>
    </source>
</evidence>
<evidence type="ECO:0000269" key="6">
    <source>
    </source>
</evidence>
<evidence type="ECO:0000303" key="7">
    <source>
    </source>
</evidence>
<evidence type="ECO:0000305" key="8"/>
<comment type="function">
    <text evidence="1 6">Endoplasmic reticulum (ER) translocase required to remove mitochondrial transmembrane proteins mistargeted to the endoplasmic reticulum (By similarity). Acts as a dislocase that mediates the ATP-dependent extraction of mislocalized mitochondrial transmembrane proteins from the endoplasmic reticulum membrane (By similarity). Works in concert with the ER Ca(2+) pump srcA to support ER homeostasis (PubMed:34663092). With srcA, also supports redox homeostasis and virulence (PubMed:34663092).</text>
</comment>
<comment type="catalytic activity">
    <reaction evidence="1">
        <text>[protein]-with a C-terminal TM segment(out) + ATP + H2O = [protein]-with a C-terminal TM segment(in) + ADP + phosphate + H(+)</text>
        <dbReference type="Rhea" id="RHEA:66168"/>
        <dbReference type="Rhea" id="RHEA-COMP:16963"/>
        <dbReference type="ChEBI" id="CHEBI:15377"/>
        <dbReference type="ChEBI" id="CHEBI:15378"/>
        <dbReference type="ChEBI" id="CHEBI:30616"/>
        <dbReference type="ChEBI" id="CHEBI:43474"/>
        <dbReference type="ChEBI" id="CHEBI:90782"/>
        <dbReference type="ChEBI" id="CHEBI:456216"/>
    </reaction>
</comment>
<comment type="cofactor">
    <cofactor evidence="1">
        <name>Mg(2+)</name>
        <dbReference type="ChEBI" id="CHEBI:18420"/>
    </cofactor>
</comment>
<comment type="activity regulation">
    <text evidence="1">The ATPase activity is stimulated by phosphatidylinositol 4-phosphate (PI4P).</text>
</comment>
<comment type="subcellular location">
    <subcellularLocation>
        <location evidence="6">Endoplasmic reticulum membrane</location>
        <topology evidence="3">Multi-pass membrane protein</topology>
    </subcellularLocation>
</comment>
<comment type="induction">
    <text evidence="6">Expression is induced by ER stress in a UPR-dependent manner (PubMed:34663092). Leads to the down-regulation of genes largely associated with the metabolism of carbohydrates, amino acids, nitrogen, and sulfur; as well as genes that encode abundantly secreted proteins (PubMed:34663092).</text>
</comment>
<comment type="domain">
    <text evidence="1">Contains a large substrate-binding pocket that recognizes alpha-helical transmembranes, which alternately faces the endoplasmic reticulum lumen and cytosol, while remaining accessible to the lipid bilayer through a lateral opening (By similarity). The translocase alternates between two conformations: inward-open (E1) and outward-open (E2) states (By similarity). Undergoes a series of conformational changes with ATP-binding, phosphorylation of the Asp active site and subsequent dephosphorylation in a Post-Albers cycle (i.e., E1 -&gt; E1-ATP -&gt; E1P-ADP -&gt; E1P -&gt; E2P -&gt; E2-Pi -&gt; E1) (By similarity). A substrate transmembrane helix with a short, preferentially positively charged lumenal segment binds to the outward-open pocket and the E2P-to-E1 transition flips the transmembrane by a switch from the outward-open to inward-open conformation (By similarity).</text>
</comment>
<comment type="disruption phenotype">
    <text evidence="6">Induces acute ER stress.</text>
</comment>
<comment type="similarity">
    <text evidence="8">Belongs to the cation transport ATPase (P-type) (TC 3.A.3) family. Type V subfamily.</text>
</comment>
<feature type="chain" id="PRO_0000456886" description="Endoplasmic reticulum transmembrane helix translocase spfA">
    <location>
        <begin position="1"/>
        <end position="1303"/>
    </location>
</feature>
<feature type="transmembrane region" description="Helical" evidence="3">
    <location>
        <begin position="25"/>
        <end position="45"/>
    </location>
</feature>
<feature type="transmembrane region" description="Helical" evidence="3">
    <location>
        <begin position="57"/>
        <end position="77"/>
    </location>
</feature>
<feature type="transmembrane region" description="Helical" evidence="3">
    <location>
        <begin position="201"/>
        <end position="221"/>
    </location>
</feature>
<feature type="transmembrane region" description="Helical" evidence="3">
    <location>
        <begin position="223"/>
        <end position="243"/>
    </location>
</feature>
<feature type="transmembrane region" description="Helical" evidence="3">
    <location>
        <begin position="415"/>
        <end position="435"/>
    </location>
</feature>
<feature type="transmembrane region" description="Helical" evidence="3">
    <location>
        <begin position="1060"/>
        <end position="1080"/>
    </location>
</feature>
<feature type="transmembrane region" description="Helical" evidence="3">
    <location>
        <begin position="1082"/>
        <end position="1102"/>
    </location>
</feature>
<feature type="transmembrane region" description="Helical" evidence="3">
    <location>
        <begin position="1122"/>
        <end position="1142"/>
    </location>
</feature>
<feature type="transmembrane region" description="Helical" evidence="3">
    <location>
        <begin position="1201"/>
        <end position="1221"/>
    </location>
</feature>
<feature type="transmembrane region" description="Helical" evidence="3">
    <location>
        <begin position="1239"/>
        <end position="1259"/>
    </location>
</feature>
<feature type="region of interest" description="A-domain; part 1" evidence="1">
    <location>
        <begin position="158"/>
        <end position="191"/>
    </location>
</feature>
<feature type="region of interest" description="A-domain; part 2" evidence="1">
    <location>
        <begin position="256"/>
        <end position="408"/>
    </location>
</feature>
<feature type="region of interest" description="P-domain; part 1" evidence="1">
    <location>
        <begin position="484"/>
        <end position="513"/>
    </location>
</feature>
<feature type="region of interest" description="N-domain" evidence="1">
    <location>
        <begin position="515"/>
        <end position="721"/>
    </location>
</feature>
<feature type="region of interest" description="P-domain; part 2" evidence="1">
    <location>
        <begin position="724"/>
        <end position="883"/>
    </location>
</feature>
<feature type="region of interest" description="Arm-like" evidence="1">
    <location>
        <begin position="884"/>
        <end position="1019"/>
    </location>
</feature>
<feature type="region of interest" description="P-domain; part 3" evidence="1">
    <location>
        <begin position="1020"/>
        <end position="1035"/>
    </location>
</feature>
<feature type="region of interest" description="Disordered" evidence="5">
    <location>
        <begin position="1277"/>
        <end position="1303"/>
    </location>
</feature>
<feature type="active site" description="4-aspartylphosphate intermediate" evidence="1">
    <location>
        <position position="505"/>
    </location>
</feature>
<feature type="binding site" evidence="1">
    <location>
        <begin position="505"/>
        <end position="507"/>
    </location>
    <ligand>
        <name>ATP</name>
        <dbReference type="ChEBI" id="CHEBI:30616"/>
    </ligand>
</feature>
<feature type="binding site" evidence="1">
    <location>
        <position position="505"/>
    </location>
    <ligand>
        <name>Mg(2+)</name>
        <dbReference type="ChEBI" id="CHEBI:18420"/>
    </ligand>
</feature>
<feature type="binding site" evidence="1">
    <location>
        <position position="507"/>
    </location>
    <ligand>
        <name>Mg(2+)</name>
        <dbReference type="ChEBI" id="CHEBI:18420"/>
    </ligand>
</feature>
<feature type="binding site" evidence="2">
    <location>
        <position position="616"/>
    </location>
    <ligand>
        <name>ATP</name>
        <dbReference type="ChEBI" id="CHEBI:30616"/>
    </ligand>
</feature>
<feature type="binding site" evidence="1">
    <location>
        <position position="678"/>
    </location>
    <ligand>
        <name>ATP</name>
        <dbReference type="ChEBI" id="CHEBI:30616"/>
    </ligand>
</feature>
<feature type="binding site" evidence="1">
    <location>
        <position position="746"/>
    </location>
    <ligand>
        <name>ATP</name>
        <dbReference type="ChEBI" id="CHEBI:30616"/>
    </ligand>
</feature>
<feature type="binding site" evidence="1">
    <location>
        <begin position="862"/>
        <end position="866"/>
    </location>
    <ligand>
        <name>ATP</name>
        <dbReference type="ChEBI" id="CHEBI:30616"/>
    </ligand>
</feature>
<feature type="binding site" evidence="1">
    <location>
        <position position="862"/>
    </location>
    <ligand>
        <name>Mg(2+)</name>
        <dbReference type="ChEBI" id="CHEBI:18420"/>
    </ligand>
</feature>
<feature type="glycosylation site" description="N-linked (GlcNAc...) asparagine" evidence="4">
    <location>
        <position position="287"/>
    </location>
</feature>
<feature type="glycosylation site" description="N-linked (GlcNAc...) asparagine" evidence="4">
    <location>
        <position position="474"/>
    </location>
</feature>
<feature type="glycosylation site" description="N-linked (GlcNAc...) asparagine" evidence="4">
    <location>
        <position position="589"/>
    </location>
</feature>
<feature type="glycosylation site" description="N-linked (GlcNAc...) asparagine" evidence="4">
    <location>
        <position position="734"/>
    </location>
</feature>
<feature type="glycosylation site" description="N-linked (GlcNAc...) asparagine" evidence="4">
    <location>
        <position position="958"/>
    </location>
</feature>